<organism>
    <name type="scientific">Mycobacterium leprae (strain TN)</name>
    <dbReference type="NCBI Taxonomy" id="272631"/>
    <lineage>
        <taxon>Bacteria</taxon>
        <taxon>Bacillati</taxon>
        <taxon>Actinomycetota</taxon>
        <taxon>Actinomycetes</taxon>
        <taxon>Mycobacteriales</taxon>
        <taxon>Mycobacteriaceae</taxon>
        <taxon>Mycobacterium</taxon>
    </lineage>
</organism>
<keyword id="KW-0489">Methyltransferase</keyword>
<keyword id="KW-1185">Reference proteome</keyword>
<keyword id="KW-0949">S-adenosyl-L-methionine</keyword>
<keyword id="KW-0808">Transferase</keyword>
<sequence>MAATPEFGSLRSDDDHWDIVSSVGYTALLVAGWRALHAVGPQPLVRDEYAKYFITASRDPYLMNLLANPGTSLNETAFPRLYGVQTRFFDDFFSSAGDTGIRQAVIVAAGLDSRAYRLKWPNGATVFEIDLPKVLEFKARVLAEQGAIPNAGRSEVAADLRADWPRALKAAGFDPQRSSAWSVEGLLPYLTNDAQSALFTRIGELCAPGSRIAVGALGSRLDRKQLAALEATHPGVNISGDVDFSALTYEPKTDSAQWLAAHGWAVEPVRNTLELQTSYGMTPPDVDVQMDSFMHSQYITATR</sequence>
<protein>
    <recommendedName>
        <fullName>Putative S-adenosyl-L-methionine-dependent methyltransferase ML2020</fullName>
        <ecNumber>2.1.1.-</ecNumber>
    </recommendedName>
</protein>
<name>Y2020_MYCLE</name>
<reference key="1">
    <citation type="journal article" date="2001" name="Nature">
        <title>Massive gene decay in the leprosy bacillus.</title>
        <authorList>
            <person name="Cole S.T."/>
            <person name="Eiglmeier K."/>
            <person name="Parkhill J."/>
            <person name="James K.D."/>
            <person name="Thomson N.R."/>
            <person name="Wheeler P.R."/>
            <person name="Honore N."/>
            <person name="Garnier T."/>
            <person name="Churcher C.M."/>
            <person name="Harris D.E."/>
            <person name="Mungall K.L."/>
            <person name="Basham D."/>
            <person name="Brown D."/>
            <person name="Chillingworth T."/>
            <person name="Connor R."/>
            <person name="Davies R.M."/>
            <person name="Devlin K."/>
            <person name="Duthoy S."/>
            <person name="Feltwell T."/>
            <person name="Fraser A."/>
            <person name="Hamlin N."/>
            <person name="Holroyd S."/>
            <person name="Hornsby T."/>
            <person name="Jagels K."/>
            <person name="Lacroix C."/>
            <person name="Maclean J."/>
            <person name="Moule S."/>
            <person name="Murphy L.D."/>
            <person name="Oliver K."/>
            <person name="Quail M.A."/>
            <person name="Rajandream M.A."/>
            <person name="Rutherford K.M."/>
            <person name="Rutter S."/>
            <person name="Seeger K."/>
            <person name="Simon S."/>
            <person name="Simmonds M."/>
            <person name="Skelton J."/>
            <person name="Squares R."/>
            <person name="Squares S."/>
            <person name="Stevens K."/>
            <person name="Taylor K."/>
            <person name="Whitehead S."/>
            <person name="Woodward J.R."/>
            <person name="Barrell B.G."/>
        </authorList>
    </citation>
    <scope>NUCLEOTIDE SEQUENCE [LARGE SCALE GENOMIC DNA]</scope>
    <source>
        <strain>TN</strain>
    </source>
</reference>
<comment type="function">
    <text evidence="1">Exhibits S-adenosyl-L-methionine-dependent methyltransferase activity.</text>
</comment>
<comment type="similarity">
    <text evidence="2">Belongs to the UPF0677 family.</text>
</comment>
<comment type="sequence caution" evidence="2">
    <conflict type="erroneous initiation">
        <sequence resource="EMBL-CDS" id="CAC30975"/>
    </conflict>
</comment>
<proteinExistence type="inferred from homology"/>
<gene>
    <name type="ordered locus">ML2020</name>
</gene>
<accession>Q9CBG0</accession>
<feature type="chain" id="PRO_0000361159" description="Putative S-adenosyl-L-methionine-dependent methyltransferase ML2020">
    <location>
        <begin position="1"/>
        <end position="303"/>
    </location>
</feature>
<feature type="binding site" evidence="1">
    <location>
        <position position="130"/>
    </location>
    <ligand>
        <name>S-adenosyl-L-methionine</name>
        <dbReference type="ChEBI" id="CHEBI:59789"/>
    </ligand>
</feature>
<feature type="binding site" evidence="1">
    <location>
        <begin position="159"/>
        <end position="160"/>
    </location>
    <ligand>
        <name>S-adenosyl-L-methionine</name>
        <dbReference type="ChEBI" id="CHEBI:59789"/>
    </ligand>
</feature>
<dbReference type="EC" id="2.1.1.-"/>
<dbReference type="EMBL" id="AL583924">
    <property type="protein sequence ID" value="CAC30975.1"/>
    <property type="status" value="ALT_INIT"/>
    <property type="molecule type" value="Genomic_DNA"/>
</dbReference>
<dbReference type="PIR" id="G87161">
    <property type="entry name" value="G87161"/>
</dbReference>
<dbReference type="RefSeq" id="WP_041323116.1">
    <property type="nucleotide sequence ID" value="NC_002677.1"/>
</dbReference>
<dbReference type="SMR" id="Q9CBG0"/>
<dbReference type="STRING" id="272631.gene:17575872"/>
<dbReference type="KEGG" id="mle:ML2020"/>
<dbReference type="Leproma" id="ML2020"/>
<dbReference type="eggNOG" id="COG3315">
    <property type="taxonomic scope" value="Bacteria"/>
</dbReference>
<dbReference type="HOGENOM" id="CLU_056160_2_1_11"/>
<dbReference type="Proteomes" id="UP000000806">
    <property type="component" value="Chromosome"/>
</dbReference>
<dbReference type="GO" id="GO:0008168">
    <property type="term" value="F:methyltransferase activity"/>
    <property type="evidence" value="ECO:0007669"/>
    <property type="project" value="UniProtKB-KW"/>
</dbReference>
<dbReference type="GO" id="GO:0032259">
    <property type="term" value="P:methylation"/>
    <property type="evidence" value="ECO:0007669"/>
    <property type="project" value="UniProtKB-KW"/>
</dbReference>
<dbReference type="Gene3D" id="3.40.50.150">
    <property type="entry name" value="Vaccinia Virus protein VP39"/>
    <property type="match status" value="1"/>
</dbReference>
<dbReference type="InterPro" id="IPR007213">
    <property type="entry name" value="Ppm1/Ppm2/Tcmp"/>
</dbReference>
<dbReference type="InterPro" id="IPR029063">
    <property type="entry name" value="SAM-dependent_MTases_sf"/>
</dbReference>
<dbReference type="InterPro" id="IPR011610">
    <property type="entry name" value="SAM_mthyl_Trfase_ML2640-like"/>
</dbReference>
<dbReference type="NCBIfam" id="TIGR00027">
    <property type="entry name" value="mthyl_TIGR00027"/>
    <property type="match status" value="1"/>
</dbReference>
<dbReference type="PANTHER" id="PTHR43619">
    <property type="entry name" value="S-ADENOSYL-L-METHIONINE-DEPENDENT METHYLTRANSFERASE YKTD-RELATED"/>
    <property type="match status" value="1"/>
</dbReference>
<dbReference type="PANTHER" id="PTHR43619:SF2">
    <property type="entry name" value="S-ADENOSYL-L-METHIONINE-DEPENDENT METHYLTRANSFERASES SUPERFAMILY PROTEIN"/>
    <property type="match status" value="1"/>
</dbReference>
<dbReference type="Pfam" id="PF04072">
    <property type="entry name" value="LCM"/>
    <property type="match status" value="1"/>
</dbReference>
<dbReference type="SUPFAM" id="SSF53335">
    <property type="entry name" value="S-adenosyl-L-methionine-dependent methyltransferases"/>
    <property type="match status" value="1"/>
</dbReference>
<evidence type="ECO:0000250" key="1"/>
<evidence type="ECO:0000305" key="2"/>